<sequence length="658" mass="73970">MAKVAQIRAIVEQLKRYDYHYYVLDDPLVSDFEYDQLYKQLQALEQAHPELIQPDSPTQRVGGIVVEAFNKFPHQNPMLSLDNAFDTATIASFIANINNLTGVQNRFVVEPKIDGVSISLTYENGLLTRALTRGDGLVGEDVLSNVKTIKSIPLTIPFHKQVEIRGEIFVDKKTFAQINENLAKPFANARNLAAGTLRNLNSEVSAKRKLKAFFYFVPNALTLGCRSQSAVLAQLKQWNFPVSKAVASFDRPEALIEYLEQFDQTRDQLNFQVDGLVVKLDNFHFYDQLGFTSKFPRWALAYKFKPKFVQTKLRGVLVTVGRTGKINYTAQLDPVNLEGTVVSAATLHNFDYIKEKDIRLNDTVIIYKAGEIIPKVLEVCLPLRTAANQPIPEQTHCPACQAPLVQYKDEVDQYCTNERCDQRNLEAINYFVSKTAMDIQGLSIQTISKLYENNLVRSVVDLYHLKEHKAAVLALELKIGEVLFNKLISSIEQSKTKGMARLLTGLGIKHVGQVLAKSLTKHFENIDALQSASMETLLELPDVGPTVAESLFNWFHNDNNLQLLAALKAVGVQMDALKSNTNFDTASIYFQKSFVITGSFPISRDTIKNLLVNKYDCRFTNNVTSKVDFVLAGIKATPRKLEQAKALNIPIINEPIWT</sequence>
<proteinExistence type="inferred from homology"/>
<comment type="function">
    <text evidence="1">DNA ligase that catalyzes the formation of phosphodiester linkages between 5'-phosphoryl and 3'-hydroxyl groups in double-stranded DNA using NAD as a coenzyme and as the energy source for the reaction. It is essential for DNA replication and repair of damaged DNA.</text>
</comment>
<comment type="catalytic activity">
    <reaction evidence="1">
        <text>NAD(+) + (deoxyribonucleotide)n-3'-hydroxyl + 5'-phospho-(deoxyribonucleotide)m = (deoxyribonucleotide)n+m + AMP + beta-nicotinamide D-nucleotide.</text>
        <dbReference type="EC" id="6.5.1.2"/>
    </reaction>
</comment>
<comment type="cofactor">
    <cofactor evidence="1">
        <name>Mg(2+)</name>
        <dbReference type="ChEBI" id="CHEBI:18420"/>
    </cofactor>
    <cofactor evidence="1">
        <name>Mn(2+)</name>
        <dbReference type="ChEBI" id="CHEBI:29035"/>
    </cofactor>
</comment>
<comment type="similarity">
    <text evidence="1">Belongs to the NAD-dependent DNA ligase family. LigA subfamily.</text>
</comment>
<name>DNLJ_MYCPN</name>
<reference key="1">
    <citation type="journal article" date="1996" name="Nucleic Acids Res.">
        <title>Complete sequence analysis of the genome of the bacterium Mycoplasma pneumoniae.</title>
        <authorList>
            <person name="Himmelreich R."/>
            <person name="Hilbert H."/>
            <person name="Plagens H."/>
            <person name="Pirkl E."/>
            <person name="Li B.-C."/>
            <person name="Herrmann R."/>
        </authorList>
    </citation>
    <scope>NUCLEOTIDE SEQUENCE [LARGE SCALE GENOMIC DNA]</scope>
    <source>
        <strain>ATCC 29342 / M129 / Subtype 1</strain>
    </source>
</reference>
<organism>
    <name type="scientific">Mycoplasma pneumoniae (strain ATCC 29342 / M129 / Subtype 1)</name>
    <name type="common">Mycoplasmoides pneumoniae</name>
    <dbReference type="NCBI Taxonomy" id="272634"/>
    <lineage>
        <taxon>Bacteria</taxon>
        <taxon>Bacillati</taxon>
        <taxon>Mycoplasmatota</taxon>
        <taxon>Mycoplasmoidales</taxon>
        <taxon>Mycoplasmoidaceae</taxon>
        <taxon>Mycoplasmoides</taxon>
    </lineage>
</organism>
<gene>
    <name evidence="1" type="primary">ligA</name>
    <name type="synonym">lig</name>
    <name type="ordered locus">MPN_357</name>
    <name type="ORF">MP479</name>
</gene>
<evidence type="ECO:0000255" key="1">
    <source>
        <dbReference type="HAMAP-Rule" id="MF_01588"/>
    </source>
</evidence>
<dbReference type="EC" id="6.5.1.2" evidence="1"/>
<dbReference type="EMBL" id="U00089">
    <property type="protein sequence ID" value="AAB96127.1"/>
    <property type="molecule type" value="Genomic_DNA"/>
</dbReference>
<dbReference type="PIR" id="S73805">
    <property type="entry name" value="S73805"/>
</dbReference>
<dbReference type="RefSeq" id="NP_110045.1">
    <property type="nucleotide sequence ID" value="NC_000912.1"/>
</dbReference>
<dbReference type="RefSeq" id="WP_010874713.1">
    <property type="nucleotide sequence ID" value="NZ_OU342337.1"/>
</dbReference>
<dbReference type="SMR" id="P78021"/>
<dbReference type="IntAct" id="P78021">
    <property type="interactions" value="1"/>
</dbReference>
<dbReference type="STRING" id="272634.MPN_357"/>
<dbReference type="EnsemblBacteria" id="AAB96127">
    <property type="protein sequence ID" value="AAB96127"/>
    <property type="gene ID" value="MPN_357"/>
</dbReference>
<dbReference type="KEGG" id="mpn:MPN_357"/>
<dbReference type="PATRIC" id="fig|272634.6.peg.384"/>
<dbReference type="HOGENOM" id="CLU_007764_2_1_14"/>
<dbReference type="OrthoDB" id="9759736at2"/>
<dbReference type="Proteomes" id="UP000000808">
    <property type="component" value="Chromosome"/>
</dbReference>
<dbReference type="GO" id="GO:0005829">
    <property type="term" value="C:cytosol"/>
    <property type="evidence" value="ECO:0007669"/>
    <property type="project" value="TreeGrafter"/>
</dbReference>
<dbReference type="GO" id="GO:0003677">
    <property type="term" value="F:DNA binding"/>
    <property type="evidence" value="ECO:0007669"/>
    <property type="project" value="InterPro"/>
</dbReference>
<dbReference type="GO" id="GO:0003911">
    <property type="term" value="F:DNA ligase (NAD+) activity"/>
    <property type="evidence" value="ECO:0007669"/>
    <property type="project" value="UniProtKB-UniRule"/>
</dbReference>
<dbReference type="GO" id="GO:0046872">
    <property type="term" value="F:metal ion binding"/>
    <property type="evidence" value="ECO:0007669"/>
    <property type="project" value="UniProtKB-KW"/>
</dbReference>
<dbReference type="GO" id="GO:0006281">
    <property type="term" value="P:DNA repair"/>
    <property type="evidence" value="ECO:0007669"/>
    <property type="project" value="UniProtKB-KW"/>
</dbReference>
<dbReference type="GO" id="GO:0006260">
    <property type="term" value="P:DNA replication"/>
    <property type="evidence" value="ECO:0007669"/>
    <property type="project" value="UniProtKB-KW"/>
</dbReference>
<dbReference type="CDD" id="cd00114">
    <property type="entry name" value="LIGANc"/>
    <property type="match status" value="1"/>
</dbReference>
<dbReference type="FunFam" id="1.10.150.20:FF:000006">
    <property type="entry name" value="DNA ligase"/>
    <property type="match status" value="1"/>
</dbReference>
<dbReference type="FunFam" id="1.10.287.610:FF:000002">
    <property type="entry name" value="DNA ligase"/>
    <property type="match status" value="1"/>
</dbReference>
<dbReference type="FunFam" id="2.40.50.140:FF:000012">
    <property type="entry name" value="DNA ligase"/>
    <property type="match status" value="1"/>
</dbReference>
<dbReference type="Gene3D" id="6.20.10.30">
    <property type="match status" value="1"/>
</dbReference>
<dbReference type="Gene3D" id="1.10.150.20">
    <property type="entry name" value="5' to 3' exonuclease, C-terminal subdomain"/>
    <property type="match status" value="2"/>
</dbReference>
<dbReference type="Gene3D" id="3.40.50.10190">
    <property type="entry name" value="BRCT domain"/>
    <property type="match status" value="1"/>
</dbReference>
<dbReference type="Gene3D" id="3.30.470.30">
    <property type="entry name" value="DNA ligase/mRNA capping enzyme"/>
    <property type="match status" value="1"/>
</dbReference>
<dbReference type="Gene3D" id="1.10.287.610">
    <property type="entry name" value="Helix hairpin bin"/>
    <property type="match status" value="1"/>
</dbReference>
<dbReference type="Gene3D" id="2.40.50.140">
    <property type="entry name" value="Nucleic acid-binding proteins"/>
    <property type="match status" value="1"/>
</dbReference>
<dbReference type="HAMAP" id="MF_01588">
    <property type="entry name" value="DNA_ligase_A"/>
    <property type="match status" value="1"/>
</dbReference>
<dbReference type="InterPro" id="IPR001357">
    <property type="entry name" value="BRCT_dom"/>
</dbReference>
<dbReference type="InterPro" id="IPR036420">
    <property type="entry name" value="BRCT_dom_sf"/>
</dbReference>
<dbReference type="InterPro" id="IPR041663">
    <property type="entry name" value="DisA/LigA_HHH"/>
</dbReference>
<dbReference type="InterPro" id="IPR001679">
    <property type="entry name" value="DNA_ligase"/>
</dbReference>
<dbReference type="InterPro" id="IPR018239">
    <property type="entry name" value="DNA_ligase_AS"/>
</dbReference>
<dbReference type="InterPro" id="IPR033136">
    <property type="entry name" value="DNA_ligase_CS"/>
</dbReference>
<dbReference type="InterPro" id="IPR013839">
    <property type="entry name" value="DNAligase_adenylation"/>
</dbReference>
<dbReference type="InterPro" id="IPR013840">
    <property type="entry name" value="DNAligase_N"/>
</dbReference>
<dbReference type="InterPro" id="IPR003583">
    <property type="entry name" value="Hlx-hairpin-Hlx_DNA-bd_motif"/>
</dbReference>
<dbReference type="InterPro" id="IPR012340">
    <property type="entry name" value="NA-bd_OB-fold"/>
</dbReference>
<dbReference type="InterPro" id="IPR004150">
    <property type="entry name" value="NAD_DNA_ligase_OB"/>
</dbReference>
<dbReference type="InterPro" id="IPR010994">
    <property type="entry name" value="RuvA_2-like"/>
</dbReference>
<dbReference type="InterPro" id="IPR004149">
    <property type="entry name" value="Znf_DNAligase_C4"/>
</dbReference>
<dbReference type="NCBIfam" id="TIGR00575">
    <property type="entry name" value="dnlj"/>
    <property type="match status" value="1"/>
</dbReference>
<dbReference type="NCBIfam" id="NF005932">
    <property type="entry name" value="PRK07956.1"/>
    <property type="match status" value="1"/>
</dbReference>
<dbReference type="PANTHER" id="PTHR23389">
    <property type="entry name" value="CHROMOSOME TRANSMISSION FIDELITY FACTOR 18"/>
    <property type="match status" value="1"/>
</dbReference>
<dbReference type="PANTHER" id="PTHR23389:SF9">
    <property type="entry name" value="DNA LIGASE"/>
    <property type="match status" value="1"/>
</dbReference>
<dbReference type="Pfam" id="PF00533">
    <property type="entry name" value="BRCT"/>
    <property type="match status" value="1"/>
</dbReference>
<dbReference type="Pfam" id="PF01653">
    <property type="entry name" value="DNA_ligase_aden"/>
    <property type="match status" value="1"/>
</dbReference>
<dbReference type="Pfam" id="PF03120">
    <property type="entry name" value="DNA_ligase_OB"/>
    <property type="match status" value="1"/>
</dbReference>
<dbReference type="Pfam" id="PF03119">
    <property type="entry name" value="DNA_ligase_ZBD"/>
    <property type="match status" value="1"/>
</dbReference>
<dbReference type="Pfam" id="PF12826">
    <property type="entry name" value="HHH_2"/>
    <property type="match status" value="1"/>
</dbReference>
<dbReference type="Pfam" id="PF22745">
    <property type="entry name" value="Nlig-Ia"/>
    <property type="match status" value="1"/>
</dbReference>
<dbReference type="PIRSF" id="PIRSF001604">
    <property type="entry name" value="LigA"/>
    <property type="match status" value="1"/>
</dbReference>
<dbReference type="SMART" id="SM00278">
    <property type="entry name" value="HhH1"/>
    <property type="match status" value="2"/>
</dbReference>
<dbReference type="SMART" id="SM00532">
    <property type="entry name" value="LIGANc"/>
    <property type="match status" value="1"/>
</dbReference>
<dbReference type="SUPFAM" id="SSF52113">
    <property type="entry name" value="BRCT domain"/>
    <property type="match status" value="1"/>
</dbReference>
<dbReference type="SUPFAM" id="SSF56091">
    <property type="entry name" value="DNA ligase/mRNA capping enzyme, catalytic domain"/>
    <property type="match status" value="1"/>
</dbReference>
<dbReference type="SUPFAM" id="SSF50249">
    <property type="entry name" value="Nucleic acid-binding proteins"/>
    <property type="match status" value="1"/>
</dbReference>
<dbReference type="SUPFAM" id="SSF47781">
    <property type="entry name" value="RuvA domain 2-like"/>
    <property type="match status" value="1"/>
</dbReference>
<dbReference type="PROSITE" id="PS01055">
    <property type="entry name" value="DNA_LIGASE_N1"/>
    <property type="match status" value="1"/>
</dbReference>
<dbReference type="PROSITE" id="PS01056">
    <property type="entry name" value="DNA_LIGASE_N2"/>
    <property type="match status" value="1"/>
</dbReference>
<keyword id="KW-0227">DNA damage</keyword>
<keyword id="KW-0234">DNA repair</keyword>
<keyword id="KW-0235">DNA replication</keyword>
<keyword id="KW-0436">Ligase</keyword>
<keyword id="KW-0460">Magnesium</keyword>
<keyword id="KW-0464">Manganese</keyword>
<keyword id="KW-0479">Metal-binding</keyword>
<keyword id="KW-0520">NAD</keyword>
<keyword id="KW-1185">Reference proteome</keyword>
<keyword id="KW-0862">Zinc</keyword>
<protein>
    <recommendedName>
        <fullName evidence="1">DNA ligase</fullName>
        <ecNumber evidence="1">6.5.1.2</ecNumber>
    </recommendedName>
    <alternativeName>
        <fullName evidence="1">Polydeoxyribonucleotide synthase [NAD(+)]</fullName>
    </alternativeName>
</protein>
<accession>P78021</accession>
<feature type="chain" id="PRO_0000161750" description="DNA ligase">
    <location>
        <begin position="1"/>
        <end position="658"/>
    </location>
</feature>
<feature type="domain" description="BRCT" evidence="1">
    <location>
        <begin position="584"/>
        <end position="654"/>
    </location>
</feature>
<feature type="active site" description="N6-AMP-lysine intermediate" evidence="1">
    <location>
        <position position="112"/>
    </location>
</feature>
<feature type="binding site" evidence="1">
    <location>
        <begin position="31"/>
        <end position="35"/>
    </location>
    <ligand>
        <name>NAD(+)</name>
        <dbReference type="ChEBI" id="CHEBI:57540"/>
    </ligand>
</feature>
<feature type="binding site" evidence="1">
    <location>
        <begin position="80"/>
        <end position="81"/>
    </location>
    <ligand>
        <name>NAD(+)</name>
        <dbReference type="ChEBI" id="CHEBI:57540"/>
    </ligand>
</feature>
<feature type="binding site" evidence="1">
    <location>
        <position position="110"/>
    </location>
    <ligand>
        <name>NAD(+)</name>
        <dbReference type="ChEBI" id="CHEBI:57540"/>
    </ligand>
</feature>
<feature type="binding site" evidence="1">
    <location>
        <position position="133"/>
    </location>
    <ligand>
        <name>NAD(+)</name>
        <dbReference type="ChEBI" id="CHEBI:57540"/>
    </ligand>
</feature>
<feature type="binding site" evidence="1">
    <location>
        <position position="167"/>
    </location>
    <ligand>
        <name>NAD(+)</name>
        <dbReference type="ChEBI" id="CHEBI:57540"/>
    </ligand>
</feature>
<feature type="binding site" evidence="1">
    <location>
        <position position="279"/>
    </location>
    <ligand>
        <name>NAD(+)</name>
        <dbReference type="ChEBI" id="CHEBI:57540"/>
    </ligand>
</feature>
<feature type="binding site" evidence="1">
    <location>
        <position position="303"/>
    </location>
    <ligand>
        <name>NAD(+)</name>
        <dbReference type="ChEBI" id="CHEBI:57540"/>
    </ligand>
</feature>
<feature type="binding site" evidence="1">
    <location>
        <position position="397"/>
    </location>
    <ligand>
        <name>Zn(2+)</name>
        <dbReference type="ChEBI" id="CHEBI:29105"/>
    </ligand>
</feature>
<feature type="binding site" evidence="1">
    <location>
        <position position="400"/>
    </location>
    <ligand>
        <name>Zn(2+)</name>
        <dbReference type="ChEBI" id="CHEBI:29105"/>
    </ligand>
</feature>
<feature type="binding site" evidence="1">
    <location>
        <position position="415"/>
    </location>
    <ligand>
        <name>Zn(2+)</name>
        <dbReference type="ChEBI" id="CHEBI:29105"/>
    </ligand>
</feature>
<feature type="binding site" evidence="1">
    <location>
        <position position="420"/>
    </location>
    <ligand>
        <name>Zn(2+)</name>
        <dbReference type="ChEBI" id="CHEBI:29105"/>
    </ligand>
</feature>